<gene>
    <name evidence="1" type="primary">nadD</name>
    <name type="ordered locus">SPA2089</name>
</gene>
<dbReference type="EC" id="2.7.7.18" evidence="1"/>
<dbReference type="EMBL" id="CP000026">
    <property type="protein sequence ID" value="AAV77983.1"/>
    <property type="molecule type" value="Genomic_DNA"/>
</dbReference>
<dbReference type="RefSeq" id="WP_001518902.1">
    <property type="nucleotide sequence ID" value="NC_006511.1"/>
</dbReference>
<dbReference type="SMR" id="Q5PM85"/>
<dbReference type="KEGG" id="spt:SPA2089"/>
<dbReference type="HOGENOM" id="CLU_069765_0_0_6"/>
<dbReference type="UniPathway" id="UPA00253">
    <property type="reaction ID" value="UER00332"/>
</dbReference>
<dbReference type="Proteomes" id="UP000008185">
    <property type="component" value="Chromosome"/>
</dbReference>
<dbReference type="GO" id="GO:0005524">
    <property type="term" value="F:ATP binding"/>
    <property type="evidence" value="ECO:0007669"/>
    <property type="project" value="UniProtKB-KW"/>
</dbReference>
<dbReference type="GO" id="GO:0004515">
    <property type="term" value="F:nicotinate-nucleotide adenylyltransferase activity"/>
    <property type="evidence" value="ECO:0007669"/>
    <property type="project" value="UniProtKB-UniRule"/>
</dbReference>
<dbReference type="GO" id="GO:0009435">
    <property type="term" value="P:NAD biosynthetic process"/>
    <property type="evidence" value="ECO:0007669"/>
    <property type="project" value="UniProtKB-UniRule"/>
</dbReference>
<dbReference type="CDD" id="cd02165">
    <property type="entry name" value="NMNAT"/>
    <property type="match status" value="1"/>
</dbReference>
<dbReference type="FunFam" id="3.40.50.620:FF:000039">
    <property type="entry name" value="Probable nicotinate-nucleotide adenylyltransferase"/>
    <property type="match status" value="1"/>
</dbReference>
<dbReference type="Gene3D" id="3.40.50.620">
    <property type="entry name" value="HUPs"/>
    <property type="match status" value="1"/>
</dbReference>
<dbReference type="HAMAP" id="MF_00244">
    <property type="entry name" value="NaMN_adenylyltr"/>
    <property type="match status" value="1"/>
</dbReference>
<dbReference type="InterPro" id="IPR004821">
    <property type="entry name" value="Cyt_trans-like"/>
</dbReference>
<dbReference type="InterPro" id="IPR005248">
    <property type="entry name" value="NadD/NMNAT"/>
</dbReference>
<dbReference type="InterPro" id="IPR014729">
    <property type="entry name" value="Rossmann-like_a/b/a_fold"/>
</dbReference>
<dbReference type="NCBIfam" id="TIGR00125">
    <property type="entry name" value="cyt_tran_rel"/>
    <property type="match status" value="1"/>
</dbReference>
<dbReference type="NCBIfam" id="TIGR00482">
    <property type="entry name" value="nicotinate (nicotinamide) nucleotide adenylyltransferase"/>
    <property type="match status" value="1"/>
</dbReference>
<dbReference type="NCBIfam" id="NF000839">
    <property type="entry name" value="PRK00071.1-1"/>
    <property type="match status" value="1"/>
</dbReference>
<dbReference type="NCBIfam" id="NF000840">
    <property type="entry name" value="PRK00071.1-3"/>
    <property type="match status" value="1"/>
</dbReference>
<dbReference type="PANTHER" id="PTHR39321">
    <property type="entry name" value="NICOTINATE-NUCLEOTIDE ADENYLYLTRANSFERASE-RELATED"/>
    <property type="match status" value="1"/>
</dbReference>
<dbReference type="PANTHER" id="PTHR39321:SF3">
    <property type="entry name" value="PHOSPHOPANTETHEINE ADENYLYLTRANSFERASE"/>
    <property type="match status" value="1"/>
</dbReference>
<dbReference type="Pfam" id="PF01467">
    <property type="entry name" value="CTP_transf_like"/>
    <property type="match status" value="1"/>
</dbReference>
<dbReference type="SUPFAM" id="SSF52374">
    <property type="entry name" value="Nucleotidylyl transferase"/>
    <property type="match status" value="1"/>
</dbReference>
<accession>Q5PM85</accession>
<feature type="chain" id="PRO_0000181437" description="Probable nicotinate-nucleotide adenylyltransferase">
    <location>
        <begin position="1"/>
        <end position="213"/>
    </location>
</feature>
<organism>
    <name type="scientific">Salmonella paratyphi A (strain ATCC 9150 / SARB42)</name>
    <dbReference type="NCBI Taxonomy" id="295319"/>
    <lineage>
        <taxon>Bacteria</taxon>
        <taxon>Pseudomonadati</taxon>
        <taxon>Pseudomonadota</taxon>
        <taxon>Gammaproteobacteria</taxon>
        <taxon>Enterobacterales</taxon>
        <taxon>Enterobacteriaceae</taxon>
        <taxon>Salmonella</taxon>
    </lineage>
</organism>
<comment type="function">
    <text evidence="1">Catalyzes the reversible adenylation of nicotinate mononucleotide (NaMN) to nicotinic acid adenine dinucleotide (NaAD).</text>
</comment>
<comment type="catalytic activity">
    <reaction evidence="1">
        <text>nicotinate beta-D-ribonucleotide + ATP + H(+) = deamido-NAD(+) + diphosphate</text>
        <dbReference type="Rhea" id="RHEA:22860"/>
        <dbReference type="ChEBI" id="CHEBI:15378"/>
        <dbReference type="ChEBI" id="CHEBI:30616"/>
        <dbReference type="ChEBI" id="CHEBI:33019"/>
        <dbReference type="ChEBI" id="CHEBI:57502"/>
        <dbReference type="ChEBI" id="CHEBI:58437"/>
        <dbReference type="EC" id="2.7.7.18"/>
    </reaction>
</comment>
<comment type="pathway">
    <text evidence="1">Cofactor biosynthesis; NAD(+) biosynthesis; deamido-NAD(+) from nicotinate D-ribonucleotide: step 1/1.</text>
</comment>
<comment type="similarity">
    <text evidence="1">Belongs to the NadD family.</text>
</comment>
<keyword id="KW-0067">ATP-binding</keyword>
<keyword id="KW-0520">NAD</keyword>
<keyword id="KW-0547">Nucleotide-binding</keyword>
<keyword id="KW-0548">Nucleotidyltransferase</keyword>
<keyword id="KW-0662">Pyridine nucleotide biosynthesis</keyword>
<keyword id="KW-0808">Transferase</keyword>
<proteinExistence type="inferred from homology"/>
<protein>
    <recommendedName>
        <fullName evidence="1">Probable nicotinate-nucleotide adenylyltransferase</fullName>
        <ecNumber evidence="1">2.7.7.18</ecNumber>
    </recommendedName>
    <alternativeName>
        <fullName evidence="1">Deamido-NAD(+) diphosphorylase</fullName>
    </alternativeName>
    <alternativeName>
        <fullName evidence="1">Deamido-NAD(+) pyrophosphorylase</fullName>
    </alternativeName>
    <alternativeName>
        <fullName evidence="1">Nicotinate mononucleotide adenylyltransferase</fullName>
        <shortName evidence="1">NaMN adenylyltransferase</shortName>
    </alternativeName>
</protein>
<reference key="1">
    <citation type="journal article" date="2004" name="Nat. Genet.">
        <title>Comparison of genome degradation in Paratyphi A and Typhi, human-restricted serovars of Salmonella enterica that cause typhoid.</title>
        <authorList>
            <person name="McClelland M."/>
            <person name="Sanderson K.E."/>
            <person name="Clifton S.W."/>
            <person name="Latreille P."/>
            <person name="Porwollik S."/>
            <person name="Sabo A."/>
            <person name="Meyer R."/>
            <person name="Bieri T."/>
            <person name="Ozersky P."/>
            <person name="McLellan M."/>
            <person name="Harkins C.R."/>
            <person name="Wang C."/>
            <person name="Nguyen C."/>
            <person name="Berghoff A."/>
            <person name="Elliott G."/>
            <person name="Kohlberg S."/>
            <person name="Strong C."/>
            <person name="Du F."/>
            <person name="Carter J."/>
            <person name="Kremizki C."/>
            <person name="Layman D."/>
            <person name="Leonard S."/>
            <person name="Sun H."/>
            <person name="Fulton L."/>
            <person name="Nash W."/>
            <person name="Miner T."/>
            <person name="Minx P."/>
            <person name="Delehaunty K."/>
            <person name="Fronick C."/>
            <person name="Magrini V."/>
            <person name="Nhan M."/>
            <person name="Warren W."/>
            <person name="Florea L."/>
            <person name="Spieth J."/>
            <person name="Wilson R.K."/>
        </authorList>
    </citation>
    <scope>NUCLEOTIDE SEQUENCE [LARGE SCALE GENOMIC DNA]</scope>
    <source>
        <strain>ATCC 9150 / SARB42</strain>
    </source>
</reference>
<evidence type="ECO:0000255" key="1">
    <source>
        <dbReference type="HAMAP-Rule" id="MF_00244"/>
    </source>
</evidence>
<name>NADD_SALPA</name>
<sequence>MKSLQALFGGTFDPVHYGHLKPVETLANLIGLSRVIIMPNNVPPHRPQPEASSAQRKYMLELAIADKPLFTLDERELQRNAPSYTAQTLKAWREEQGPEAPLAFIIGQDSLLNFPTWHDYDTILDNTHLIVCRRPGYPLEMTQAQHQQWLEQHLTHTPDDLHQLPAGKIYLAETPWLNISATLIRERLEKGESCDDLLPENVLNYINQQGLYR</sequence>